<comment type="catalytic activity">
    <reaction evidence="1">
        <text>alpha-D-glucose 6-phosphate = beta-D-glucose 6-phosphate</text>
        <dbReference type="Rhea" id="RHEA:16249"/>
        <dbReference type="ChEBI" id="CHEBI:58225"/>
        <dbReference type="ChEBI" id="CHEBI:58247"/>
        <dbReference type="EC" id="5.1.3.15"/>
    </reaction>
</comment>
<comment type="similarity">
    <text evidence="3">Belongs to the glucose-6-phosphate 1-epimerase family.</text>
</comment>
<feature type="chain" id="PRO_0000213034" description="Putative glucose-6-phosphate 1-epimerase">
    <location>
        <begin position="1"/>
        <end position="329"/>
    </location>
</feature>
<feature type="region of interest" description="Disordered" evidence="2">
    <location>
        <begin position="1"/>
        <end position="20"/>
    </location>
</feature>
<feature type="compositionally biased region" description="Low complexity" evidence="2">
    <location>
        <begin position="1"/>
        <end position="13"/>
    </location>
</feature>
<feature type="active site" evidence="1">
    <location>
        <position position="183"/>
    </location>
</feature>
<feature type="active site" evidence="1">
    <location>
        <position position="287"/>
    </location>
</feature>
<feature type="binding site" evidence="1">
    <location>
        <position position="82"/>
    </location>
    <ligand>
        <name>substrate</name>
    </ligand>
</feature>
<feature type="binding site" evidence="1">
    <location>
        <position position="100"/>
    </location>
    <ligand>
        <name>substrate</name>
    </ligand>
</feature>
<feature type="binding site" evidence="1">
    <location>
        <position position="105"/>
    </location>
    <ligand>
        <name>substrate</name>
    </ligand>
</feature>
<feature type="binding site" evidence="1">
    <location>
        <position position="228"/>
    </location>
    <ligand>
        <name>substrate</name>
    </ligand>
</feature>
<dbReference type="EC" id="5.1.3.15" evidence="1"/>
<dbReference type="EMBL" id="U13148">
    <property type="protein sequence ID" value="AAA80575.1"/>
    <property type="molecule type" value="mRNA"/>
</dbReference>
<dbReference type="SMR" id="Q40784"/>
<dbReference type="GO" id="GO:0005737">
    <property type="term" value="C:cytoplasm"/>
    <property type="evidence" value="ECO:0007669"/>
    <property type="project" value="TreeGrafter"/>
</dbReference>
<dbReference type="GO" id="GO:0030246">
    <property type="term" value="F:carbohydrate binding"/>
    <property type="evidence" value="ECO:0007669"/>
    <property type="project" value="InterPro"/>
</dbReference>
<dbReference type="GO" id="GO:0047938">
    <property type="term" value="F:glucose-6-phosphate 1-epimerase activity"/>
    <property type="evidence" value="ECO:0007669"/>
    <property type="project" value="UniProtKB-EC"/>
</dbReference>
<dbReference type="GO" id="GO:0005975">
    <property type="term" value="P:carbohydrate metabolic process"/>
    <property type="evidence" value="ECO:0007669"/>
    <property type="project" value="InterPro"/>
</dbReference>
<dbReference type="CDD" id="cd09020">
    <property type="entry name" value="D-hex-6-P-epi_like"/>
    <property type="match status" value="1"/>
</dbReference>
<dbReference type="Gene3D" id="2.70.98.10">
    <property type="match status" value="1"/>
</dbReference>
<dbReference type="InterPro" id="IPR008183">
    <property type="entry name" value="Aldose_1/G6P_1-epimerase"/>
</dbReference>
<dbReference type="InterPro" id="IPR025532">
    <property type="entry name" value="G6P_1-epimerase"/>
</dbReference>
<dbReference type="InterPro" id="IPR011013">
    <property type="entry name" value="Gal_mutarotase_sf_dom"/>
</dbReference>
<dbReference type="InterPro" id="IPR014718">
    <property type="entry name" value="GH-type_carb-bd"/>
</dbReference>
<dbReference type="PANTHER" id="PTHR11122">
    <property type="entry name" value="APOSPORY-ASSOCIATED PROTEIN C-RELATED"/>
    <property type="match status" value="1"/>
</dbReference>
<dbReference type="PANTHER" id="PTHR11122:SF35">
    <property type="entry name" value="GLUCOSE-6-PHOSPHATE 1-EPIMERASE"/>
    <property type="match status" value="1"/>
</dbReference>
<dbReference type="Pfam" id="PF01263">
    <property type="entry name" value="Aldose_epim"/>
    <property type="match status" value="1"/>
</dbReference>
<dbReference type="PIRSF" id="PIRSF016020">
    <property type="entry name" value="PHexose_mutarotase"/>
    <property type="match status" value="1"/>
</dbReference>
<dbReference type="SUPFAM" id="SSF74650">
    <property type="entry name" value="Galactose mutarotase-like"/>
    <property type="match status" value="1"/>
</dbReference>
<reference key="1">
    <citation type="book" date="1993" name="Proceedings of the XVII international grassland congress">
        <title>A strategy for cloning apomixis-associated cDNA markers from buffelgrass.</title>
        <editorList>
            <person name="Baker M.J."/>
            <person name="Crush J.R."/>
            <person name="Humphreys L.R."/>
        </editorList>
        <authorList>
            <person name="Gustine D.L."/>
            <person name="Sherwood R.T."/>
            <person name="Hulce D.A."/>
        </authorList>
    </citation>
    <scope>NUCLEOTIDE SEQUENCE [MRNA]</scope>
    <source>
        <strain>Higgins</strain>
        <tissue>Flower</tissue>
    </source>
</reference>
<evidence type="ECO:0000250" key="1">
    <source>
        <dbReference type="UniProtKB" id="Q03161"/>
    </source>
</evidence>
<evidence type="ECO:0000256" key="2">
    <source>
        <dbReference type="SAM" id="MobiDB-lite"/>
    </source>
</evidence>
<evidence type="ECO:0000305" key="3"/>
<sequence>MAAPAPAGAAASPSPKPQLPSPFAELVKTPSGLEKVVLRGARNCCAEIYLYGGQVTSWKNDNGEELLFLSSKAIFKPPKAIRGGIPICLPQFGTHGNLEQHGFARNRFWSIDNDPPPLPVNPAIKAFVDLILRPAEEDLKIWPHSFEFRLRVALGPSGDLSLTSRIRNTNTDGRPFSYTFAYHTYFFVSDISEVRVEGLETMDYLDNLKAKERFTEQGDAIVFESEVDKVYLAAPSKIAIIDHEKKKTFVVTKEGLPDAVVWNPWDKKAKAMQDFGDAEYKNMLCVEPAAVEKPITLKPGEEWRGRIALSAVPSSYCSGQLDPLKVLHG</sequence>
<name>AAPC_CENCI</name>
<organism>
    <name type="scientific">Cenchrus ciliaris</name>
    <name type="common">Buffelgrass</name>
    <name type="synonym">Pennisetum ciliare</name>
    <dbReference type="NCBI Taxonomy" id="35872"/>
    <lineage>
        <taxon>Eukaryota</taxon>
        <taxon>Viridiplantae</taxon>
        <taxon>Streptophyta</taxon>
        <taxon>Embryophyta</taxon>
        <taxon>Tracheophyta</taxon>
        <taxon>Spermatophyta</taxon>
        <taxon>Magnoliopsida</taxon>
        <taxon>Liliopsida</taxon>
        <taxon>Poales</taxon>
        <taxon>Poaceae</taxon>
        <taxon>PACMAD clade</taxon>
        <taxon>Panicoideae</taxon>
        <taxon>Panicodae</taxon>
        <taxon>Paniceae</taxon>
        <taxon>Cenchrinae</taxon>
        <taxon>Cenchrus</taxon>
    </lineage>
</organism>
<proteinExistence type="evidence at transcript level"/>
<keyword id="KW-0413">Isomerase</keyword>
<protein>
    <recommendedName>
        <fullName evidence="1">Putative glucose-6-phosphate 1-epimerase</fullName>
        <ecNumber evidence="1">5.1.3.15</ecNumber>
    </recommendedName>
    <alternativeName>
        <fullName evidence="1">Putative D-hexose-6-phosphate mutarotase</fullName>
    </alternativeName>
    <alternativeName>
        <fullName>Putative apospory-associated protein C</fullName>
    </alternativeName>
</protein>
<accession>Q40784</accession>